<reference key="1">
    <citation type="journal article" date="2004" name="Nature">
        <title>Sequence and comparative analysis of the chicken genome provide unique perspectives on vertebrate evolution.</title>
        <authorList>
            <person name="Hillier L.W."/>
            <person name="Miller W."/>
            <person name="Birney E."/>
            <person name="Warren W."/>
            <person name="Hardison R.C."/>
            <person name="Ponting C.P."/>
            <person name="Bork P."/>
            <person name="Burt D.W."/>
            <person name="Groenen M.A.M."/>
            <person name="Delany M.E."/>
            <person name="Dodgson J.B."/>
            <person name="Chinwalla A.T."/>
            <person name="Cliften P.F."/>
            <person name="Clifton S.W."/>
            <person name="Delehaunty K.D."/>
            <person name="Fronick C."/>
            <person name="Fulton R.S."/>
            <person name="Graves T.A."/>
            <person name="Kremitzki C."/>
            <person name="Layman D."/>
            <person name="Magrini V."/>
            <person name="McPherson J.D."/>
            <person name="Miner T.L."/>
            <person name="Minx P."/>
            <person name="Nash W.E."/>
            <person name="Nhan M.N."/>
            <person name="Nelson J.O."/>
            <person name="Oddy L.G."/>
            <person name="Pohl C.S."/>
            <person name="Randall-Maher J."/>
            <person name="Smith S.M."/>
            <person name="Wallis J.W."/>
            <person name="Yang S.-P."/>
            <person name="Romanov M.N."/>
            <person name="Rondelli C.M."/>
            <person name="Paton B."/>
            <person name="Smith J."/>
            <person name="Morrice D."/>
            <person name="Daniels L."/>
            <person name="Tempest H.G."/>
            <person name="Robertson L."/>
            <person name="Masabanda J.S."/>
            <person name="Griffin D.K."/>
            <person name="Vignal A."/>
            <person name="Fillon V."/>
            <person name="Jacobbson L."/>
            <person name="Kerje S."/>
            <person name="Andersson L."/>
            <person name="Crooijmans R.P."/>
            <person name="Aerts J."/>
            <person name="van der Poel J.J."/>
            <person name="Ellegren H."/>
            <person name="Caldwell R.B."/>
            <person name="Hubbard S.J."/>
            <person name="Grafham D.V."/>
            <person name="Kierzek A.M."/>
            <person name="McLaren S.R."/>
            <person name="Overton I.M."/>
            <person name="Arakawa H."/>
            <person name="Beattie K.J."/>
            <person name="Bezzubov Y."/>
            <person name="Boardman P.E."/>
            <person name="Bonfield J.K."/>
            <person name="Croning M.D.R."/>
            <person name="Davies R.M."/>
            <person name="Francis M.D."/>
            <person name="Humphray S.J."/>
            <person name="Scott C.E."/>
            <person name="Taylor R.G."/>
            <person name="Tickle C."/>
            <person name="Brown W.R.A."/>
            <person name="Rogers J."/>
            <person name="Buerstedde J.-M."/>
            <person name="Wilson S.A."/>
            <person name="Stubbs L."/>
            <person name="Ovcharenko I."/>
            <person name="Gordon L."/>
            <person name="Lucas S."/>
            <person name="Miller M.M."/>
            <person name="Inoko H."/>
            <person name="Shiina T."/>
            <person name="Kaufman J."/>
            <person name="Salomonsen J."/>
            <person name="Skjoedt K."/>
            <person name="Wong G.K.-S."/>
            <person name="Wang J."/>
            <person name="Liu B."/>
            <person name="Wang J."/>
            <person name="Yu J."/>
            <person name="Yang H."/>
            <person name="Nefedov M."/>
            <person name="Koriabine M."/>
            <person name="Dejong P.J."/>
            <person name="Goodstadt L."/>
            <person name="Webber C."/>
            <person name="Dickens N.J."/>
            <person name="Letunic I."/>
            <person name="Suyama M."/>
            <person name="Torrents D."/>
            <person name="von Mering C."/>
            <person name="Zdobnov E.M."/>
            <person name="Makova K."/>
            <person name="Nekrutenko A."/>
            <person name="Elnitski L."/>
            <person name="Eswara P."/>
            <person name="King D.C."/>
            <person name="Yang S.-P."/>
            <person name="Tyekucheva S."/>
            <person name="Radakrishnan A."/>
            <person name="Harris R.S."/>
            <person name="Chiaromonte F."/>
            <person name="Taylor J."/>
            <person name="He J."/>
            <person name="Rijnkels M."/>
            <person name="Griffiths-Jones S."/>
            <person name="Ureta-Vidal A."/>
            <person name="Hoffman M.M."/>
            <person name="Severin J."/>
            <person name="Searle S.M.J."/>
            <person name="Law A.S."/>
            <person name="Speed D."/>
            <person name="Waddington D."/>
            <person name="Cheng Z."/>
            <person name="Tuzun E."/>
            <person name="Eichler E."/>
            <person name="Bao Z."/>
            <person name="Flicek P."/>
            <person name="Shteynberg D.D."/>
            <person name="Brent M.R."/>
            <person name="Bye J.M."/>
            <person name="Huckle E.J."/>
            <person name="Chatterji S."/>
            <person name="Dewey C."/>
            <person name="Pachter L."/>
            <person name="Kouranov A."/>
            <person name="Mourelatos Z."/>
            <person name="Hatzigeorgiou A.G."/>
            <person name="Paterson A.H."/>
            <person name="Ivarie R."/>
            <person name="Brandstrom M."/>
            <person name="Axelsson E."/>
            <person name="Backstrom N."/>
            <person name="Berlin S."/>
            <person name="Webster M.T."/>
            <person name="Pourquie O."/>
            <person name="Reymond A."/>
            <person name="Ucla C."/>
            <person name="Antonarakis S.E."/>
            <person name="Long M."/>
            <person name="Emerson J.J."/>
            <person name="Betran E."/>
            <person name="Dupanloup I."/>
            <person name="Kaessmann H."/>
            <person name="Hinrichs A.S."/>
            <person name="Bejerano G."/>
            <person name="Furey T.S."/>
            <person name="Harte R.A."/>
            <person name="Raney B."/>
            <person name="Siepel A."/>
            <person name="Kent W.J."/>
            <person name="Haussler D."/>
            <person name="Eyras E."/>
            <person name="Castelo R."/>
            <person name="Abril J.F."/>
            <person name="Castellano S."/>
            <person name="Camara F."/>
            <person name="Parra G."/>
            <person name="Guigo R."/>
            <person name="Bourque G."/>
            <person name="Tesler G."/>
            <person name="Pevzner P.A."/>
            <person name="Smit A."/>
            <person name="Fulton L.A."/>
            <person name="Mardis E.R."/>
            <person name="Wilson R.K."/>
        </authorList>
    </citation>
    <scope>NUCLEOTIDE SEQUENCE [LARGE SCALE GENOMIC DNA]</scope>
    <source>
        <strain>Red jungle fowl</strain>
    </source>
</reference>
<reference key="2">
    <citation type="journal article" date="1985" name="Biochem. J.">
        <title>Primary structure of the telopeptide and a portion of the helical domain of chicken type II procollagen as determined by DNA sequence analysis.</title>
        <authorList>
            <person name="Deak F."/>
            <person name="Argraves W.S."/>
            <person name="Kiss I."/>
            <person name="Sparks K.J."/>
            <person name="Goetinck P.F."/>
        </authorList>
    </citation>
    <scope>NUCLEOTIDE SEQUENCE [MRNA] OF 491-683 (ISOFORM 1)</scope>
</reference>
<reference key="3">
    <citation type="journal article" date="1984" name="J. Biol. Chem.">
        <title>Structure and sequence of the chicken type II procollagen gene. Characterization of the region encoding the carboxyl-terminal telopeptide and propeptide.</title>
        <authorList>
            <person name="Sandell L.J."/>
            <person name="Prentice H.L."/>
            <person name="Kravis D."/>
            <person name="Upholt W.B."/>
        </authorList>
    </citation>
    <scope>NUCLEOTIDE SEQUENCE [GENOMIC DNA] OF 572-859 (ISOFORM 2)</scope>
</reference>
<reference key="4">
    <citation type="journal article" date="1984" name="Biochemistry">
        <title>Structure of the carboxyl propeptide of chicken type II procollagen determined by DNA and protein sequence analysis.</title>
        <authorList>
            <person name="Ninomiya Y."/>
            <person name="Showalter A.M."/>
            <person name="van der Rest M."/>
            <person name="Seidah N.G."/>
            <person name="Chretien M."/>
            <person name="Olsen B.R."/>
        </authorList>
    </citation>
    <scope>NUCLEOTIDE SEQUENCE OF 604-859</scope>
</reference>
<protein>
    <recommendedName>
        <fullName evidence="2">Collagen alpha-1(II) chain</fullName>
    </recommendedName>
    <alternativeName>
        <fullName evidence="2">Alpha-1 type II collagen</fullName>
    </alternativeName>
</protein>
<comment type="function">
    <text>Type II collagen is specific for cartilaginous tissues. It is essential for the normal embryonic development of the skeleton, for linear growth and for the ability of cartilage to resist compressive forces.</text>
</comment>
<comment type="subunit">
    <text>Homotrimers of alpha 1(II) chains.</text>
</comment>
<comment type="subcellular location">
    <subcellularLocation>
        <location evidence="4">Secreted</location>
        <location evidence="4">Extracellular space</location>
        <location evidence="4">Extracellular matrix</location>
    </subcellularLocation>
</comment>
<comment type="alternative products">
    <event type="alternative splicing"/>
    <isoform>
        <id>P02460-1</id>
        <name>1</name>
        <sequence type="displayed"/>
    </isoform>
    <isoform>
        <id>P02460-2</id>
        <name>2</name>
        <sequence type="described" ref="VSP_058908"/>
    </isoform>
</comment>
<comment type="domain">
    <text evidence="1">The C-terminal propeptide, also known as COLFI domain, have crucial roles in tissue growth and repair by controlling both the intracellular assembly of procollagen molecules and the extracellular assembly of collagen fibrils. It binds a calcium ion which is essential for its function (By similarity).</text>
</comment>
<comment type="PTM">
    <text evidence="3">Contains mostly 4-hydroxyproline. Prolines at the third position of the tripeptide repeating unit (G-X-P) are 4-hydroxylated in some or all of the chains.</text>
</comment>
<comment type="PTM">
    <text evidence="3">Contains 3-hydroxyproline at a few sites. This modification occurs on the first proline residue in the sequence motif Gly-Pro-Hyp, where Hyp is 4-hydroxyproline.</text>
</comment>
<comment type="PTM">
    <text evidence="3">Lysine residues at the third position of the tripeptide repeating unit (G-X-Y) are 5-hydroxylated in some or all of the chains.</text>
</comment>
<comment type="PTM">
    <text evidence="3">O-glycosylated on hydroxylated lysine residues. The O-linked glycan consists of a Glc-Gal disaccharide.</text>
</comment>
<comment type="miscellaneous">
    <molecule>Isoform 1</molecule>
    <text evidence="6">Incomplete sequence.</text>
</comment>
<comment type="miscellaneous">
    <molecule>Isoform 2</molecule>
    <text evidence="6">Incomplete sequence.</text>
</comment>
<comment type="similarity">
    <text evidence="4">Belongs to the fibrillar collagen family.</text>
</comment>
<gene>
    <name evidence="2" type="primary">COL2A1</name>
</gene>
<proteinExistence type="evidence at transcript level"/>
<sequence length="859" mass="83228">LQGLPGKDGETGAAGPLDPGPVGERGEQGAPGPSGFQGLPGPPGPPGESGKPGDQGVPGEAGAPGLVGPRGERGFPGERGSPGAQGLQGPRGLPGTPGTDGPKGATGPAGPNGAQGPPGLQGMPGERGAAGIAGPKGDRGDVGEKGPEGAPGKDGARGLTGPIGPPGPAGPNGEKGESGPPGPSGAAGARGAPGERGEPGAPGPAGFAGPPGADGQPGAKGEQGEPGQKGDAGAPGPQGPSGAPGPQGPTGVTGPKGARGAQGPPGATGFPGAAGRVGPPGPNGNPGPPGPPGSAGKDGPKGVRGDAGPPGRAGDPGLQGPAGPPGEKGEPGEDGPAGPDGPPGPQGLAGQRGIVGLPGQRGERGFPGLPGPSGEPGKQGAPGSAGDRGPPGPVGPPGLTGPAGEPGREGNPGADGPPGRDGAAGVKGDRGETGPVGAPGAPGAPGAPGPVGPTGKQGDRGETGAQGPMGPSGPAGARGMPGPQGPRGDKGETGEAGERGLKGHRGFTGLQGLPGPPGPSGDQGAAGPAGPSGPRGPPGPVGPSGKDGSNGMPGPIGPPGPRGRSGEPGPAGPPGNPGPPGPPGPPGTGIDMSAFAGLGQTEKGPDPIRYMRADEAAGGLRQHDVEVDATLKSLNNQIESIRSPEGSKKNPARTCRDIKLCHPEWKSGDYWIDPNQGCTLDAIKVFCNMETGETCVYPTPSSIPRKNWWTSKTKDKKHVWFAETINGGFHFSYGDENLSPNTASIQMTFLRLLSTEGSQNVTYHCKNSIAYMDEETGNLKKAILIQGSNDVEIRAEGNSRFTYSVLEDGCTKHTGKWGKTVIEYRSQKTSRLPIVDIAPMDIGGADQEFGVDIGPVCFL</sequence>
<dbReference type="EMBL" id="X02663">
    <property type="protein sequence ID" value="CAA26499.1"/>
    <property type="molecule type" value="mRNA"/>
</dbReference>
<dbReference type="EMBL" id="L00063">
    <property type="protein sequence ID" value="AAB59967.1"/>
    <property type="molecule type" value="Genomic_DNA"/>
</dbReference>
<dbReference type="EMBL" id="L00061">
    <property type="protein sequence ID" value="AAB59967.1"/>
    <property type="status" value="JOINED"/>
    <property type="molecule type" value="Genomic_DNA"/>
</dbReference>
<dbReference type="EMBL" id="L00062">
    <property type="protein sequence ID" value="AAB59967.1"/>
    <property type="status" value="JOINED"/>
    <property type="molecule type" value="Genomic_DNA"/>
</dbReference>
<dbReference type="PIR" id="A02860">
    <property type="entry name" value="CGCH6C"/>
</dbReference>
<dbReference type="PIR" id="S07133">
    <property type="entry name" value="S07133"/>
</dbReference>
<dbReference type="ComplexPortal" id="CPX-960">
    <property type="entry name" value="Collagen type II trimer"/>
</dbReference>
<dbReference type="FunCoup" id="P02460">
    <property type="interactions" value="50"/>
</dbReference>
<dbReference type="IntAct" id="P02460">
    <property type="interactions" value="1"/>
</dbReference>
<dbReference type="STRING" id="9031.ENSGALP00000052906"/>
<dbReference type="GlyCosmos" id="P02460">
    <property type="glycosylation" value="1 site, No reported glycans"/>
</dbReference>
<dbReference type="GlyGen" id="P02460">
    <property type="glycosylation" value="4 sites"/>
</dbReference>
<dbReference type="PaxDb" id="9031-ENSGALP00000035064"/>
<dbReference type="VEuPathDB" id="HostDB:geneid_395069"/>
<dbReference type="VEuPathDB" id="HostDB:geneid_418752"/>
<dbReference type="eggNOG" id="KOG3544">
    <property type="taxonomic scope" value="Eukaryota"/>
</dbReference>
<dbReference type="HOGENOM" id="CLU_001074_2_3_1"/>
<dbReference type="InParanoid" id="P02460"/>
<dbReference type="OrthoDB" id="8939548at2759"/>
<dbReference type="PhylomeDB" id="P02460"/>
<dbReference type="Proteomes" id="UP000000539">
    <property type="component" value="Unassembled WGS sequence"/>
</dbReference>
<dbReference type="GO" id="GO:0005585">
    <property type="term" value="C:collagen type II trimer"/>
    <property type="evidence" value="ECO:0000353"/>
    <property type="project" value="ComplexPortal"/>
</dbReference>
<dbReference type="GO" id="GO:0031012">
    <property type="term" value="C:extracellular matrix"/>
    <property type="evidence" value="ECO:0000269"/>
    <property type="project" value="ComplexPortal"/>
</dbReference>
<dbReference type="GO" id="GO:0005576">
    <property type="term" value="C:extracellular region"/>
    <property type="evidence" value="ECO:0007669"/>
    <property type="project" value="UniProtKB-KW"/>
</dbReference>
<dbReference type="GO" id="GO:0005201">
    <property type="term" value="F:extracellular matrix structural constituent"/>
    <property type="evidence" value="ECO:0007669"/>
    <property type="project" value="InterPro"/>
</dbReference>
<dbReference type="GO" id="GO:0046872">
    <property type="term" value="F:metal ion binding"/>
    <property type="evidence" value="ECO:0007669"/>
    <property type="project" value="UniProtKB-KW"/>
</dbReference>
<dbReference type="GO" id="GO:0030199">
    <property type="term" value="P:collagen fibril organization"/>
    <property type="evidence" value="ECO:0000269"/>
    <property type="project" value="ComplexPortal"/>
</dbReference>
<dbReference type="FunFam" id="2.60.120.1000:FF:000001">
    <property type="entry name" value="Collagen alpha-1 type I chain"/>
    <property type="match status" value="1"/>
</dbReference>
<dbReference type="Gene3D" id="2.60.120.1000">
    <property type="match status" value="1"/>
</dbReference>
<dbReference type="InterPro" id="IPR008160">
    <property type="entry name" value="Collagen"/>
</dbReference>
<dbReference type="InterPro" id="IPR050149">
    <property type="entry name" value="Collagen_superfamily"/>
</dbReference>
<dbReference type="InterPro" id="IPR000885">
    <property type="entry name" value="Fib_collagen_C"/>
</dbReference>
<dbReference type="PANTHER" id="PTHR24023">
    <property type="entry name" value="COLLAGEN ALPHA"/>
    <property type="match status" value="1"/>
</dbReference>
<dbReference type="PANTHER" id="PTHR24023:SF1082">
    <property type="entry name" value="COLLAGEN TRIPLE HELIX REPEAT"/>
    <property type="match status" value="1"/>
</dbReference>
<dbReference type="Pfam" id="PF01410">
    <property type="entry name" value="COLFI"/>
    <property type="match status" value="1"/>
</dbReference>
<dbReference type="Pfam" id="PF01391">
    <property type="entry name" value="Collagen"/>
    <property type="match status" value="7"/>
</dbReference>
<dbReference type="SMART" id="SM00038">
    <property type="entry name" value="COLFI"/>
    <property type="match status" value="1"/>
</dbReference>
<dbReference type="PROSITE" id="PS51461">
    <property type="entry name" value="NC1_FIB"/>
    <property type="match status" value="1"/>
</dbReference>
<organism>
    <name type="scientific">Gallus gallus</name>
    <name type="common">Chicken</name>
    <dbReference type="NCBI Taxonomy" id="9031"/>
    <lineage>
        <taxon>Eukaryota</taxon>
        <taxon>Metazoa</taxon>
        <taxon>Chordata</taxon>
        <taxon>Craniata</taxon>
        <taxon>Vertebrata</taxon>
        <taxon>Euteleostomi</taxon>
        <taxon>Archelosauria</taxon>
        <taxon>Archosauria</taxon>
        <taxon>Dinosauria</taxon>
        <taxon>Saurischia</taxon>
        <taxon>Theropoda</taxon>
        <taxon>Coelurosauria</taxon>
        <taxon>Aves</taxon>
        <taxon>Neognathae</taxon>
        <taxon>Galloanserae</taxon>
        <taxon>Galliformes</taxon>
        <taxon>Phasianidae</taxon>
        <taxon>Phasianinae</taxon>
        <taxon>Gallus</taxon>
    </lineage>
</organism>
<accession>P02460</accession>
<accession>A0A1D5PJB4</accession>
<evidence type="ECO:0000250" key="1"/>
<evidence type="ECO:0000250" key="2">
    <source>
        <dbReference type="UniProtKB" id="P02458"/>
    </source>
</evidence>
<evidence type="ECO:0000250" key="3">
    <source>
        <dbReference type="UniProtKB" id="P05539"/>
    </source>
</evidence>
<evidence type="ECO:0000255" key="4">
    <source>
        <dbReference type="PROSITE-ProRule" id="PRU00793"/>
    </source>
</evidence>
<evidence type="ECO:0000256" key="5">
    <source>
        <dbReference type="SAM" id="MobiDB-lite"/>
    </source>
</evidence>
<evidence type="ECO:0000305" key="6"/>
<keyword id="KW-0025">Alternative splicing</keyword>
<keyword id="KW-0106">Calcium</keyword>
<keyword id="KW-0176">Collagen</keyword>
<keyword id="KW-1015">Disulfide bond</keyword>
<keyword id="KW-0272">Extracellular matrix</keyword>
<keyword id="KW-0325">Glycoprotein</keyword>
<keyword id="KW-0379">Hydroxylation</keyword>
<keyword id="KW-0479">Metal-binding</keyword>
<keyword id="KW-1185">Reference proteome</keyword>
<keyword id="KW-0677">Repeat</keyword>
<keyword id="KW-0964">Secreted</keyword>
<name>CO2A1_CHICK</name>
<feature type="chain" id="PRO_0000005727" description="Collagen alpha-1(II) chain">
    <location>
        <begin position="1" status="less than"/>
        <end position="859"/>
    </location>
</feature>
<feature type="propeptide" id="PRO_0000005728" description="C-terminal propeptide">
    <location>
        <begin position="614"/>
        <end position="859"/>
    </location>
</feature>
<feature type="domain" description="Fibrillar collagen NC1" evidence="4">
    <location>
        <begin position="625"/>
        <end position="859"/>
    </location>
</feature>
<feature type="region of interest" description="Disordered" evidence="5">
    <location>
        <begin position="1"/>
        <end position="607"/>
    </location>
</feature>
<feature type="region of interest" description="Triple-helical region">
    <location>
        <begin position="491"/>
        <end position="586"/>
    </location>
</feature>
<feature type="region of interest" description="Nonhelical region (C-terminal)">
    <location>
        <begin position="587"/>
        <end position="613"/>
    </location>
</feature>
<feature type="compositionally biased region" description="Low complexity" evidence="5">
    <location>
        <begin position="78"/>
        <end position="121"/>
    </location>
</feature>
<feature type="compositionally biased region" description="Basic and acidic residues" evidence="5">
    <location>
        <begin position="136"/>
        <end position="147"/>
    </location>
</feature>
<feature type="compositionally biased region" description="Low complexity" evidence="5">
    <location>
        <begin position="204"/>
        <end position="220"/>
    </location>
</feature>
<feature type="compositionally biased region" description="Low complexity" evidence="5">
    <location>
        <begin position="249"/>
        <end position="277"/>
    </location>
</feature>
<feature type="compositionally biased region" description="Pro residues" evidence="5">
    <location>
        <begin position="279"/>
        <end position="292"/>
    </location>
</feature>
<feature type="compositionally biased region" description="Low complexity" evidence="5">
    <location>
        <begin position="306"/>
        <end position="321"/>
    </location>
</feature>
<feature type="compositionally biased region" description="Basic and acidic residues" evidence="5">
    <location>
        <begin position="487"/>
        <end position="501"/>
    </location>
</feature>
<feature type="compositionally biased region" description="Low complexity" evidence="5">
    <location>
        <begin position="520"/>
        <end position="529"/>
    </location>
</feature>
<feature type="compositionally biased region" description="Pro residues" evidence="5">
    <location>
        <begin position="570"/>
        <end position="586"/>
    </location>
</feature>
<feature type="binding site" evidence="1">
    <location>
        <position position="673"/>
    </location>
    <ligand>
        <name>Ca(2+)</name>
        <dbReference type="ChEBI" id="CHEBI:29108"/>
    </ligand>
</feature>
<feature type="binding site" evidence="1">
    <location>
        <position position="675"/>
    </location>
    <ligand>
        <name>Ca(2+)</name>
        <dbReference type="ChEBI" id="CHEBI:29108"/>
    </ligand>
</feature>
<feature type="binding site" evidence="1">
    <location>
        <position position="676"/>
    </location>
    <ligand>
        <name>Ca(2+)</name>
        <dbReference type="ChEBI" id="CHEBI:29108"/>
    </ligand>
</feature>
<feature type="binding site" evidence="1">
    <location>
        <position position="678"/>
    </location>
    <ligand>
        <name>Ca(2+)</name>
        <dbReference type="ChEBI" id="CHEBI:29108"/>
    </ligand>
</feature>
<feature type="binding site" evidence="1">
    <location>
        <position position="681"/>
    </location>
    <ligand>
        <name>Ca(2+)</name>
        <dbReference type="ChEBI" id="CHEBI:29108"/>
    </ligand>
</feature>
<feature type="site" description="Cleavage; by procollagen C-endopeptidase">
    <location>
        <begin position="613"/>
        <end position="614"/>
    </location>
</feature>
<feature type="modified residue" description="4-hydroxyproline" evidence="3">
    <location>
        <position position="31"/>
    </location>
</feature>
<feature type="modified residue" description="4-hydroxyproline" evidence="3">
    <location>
        <position position="40"/>
    </location>
</feature>
<feature type="modified residue" description="3-hydroxyproline" evidence="3">
    <location>
        <position position="42"/>
    </location>
</feature>
<feature type="modified residue" description="4-hydroxyproline" evidence="3">
    <location>
        <position position="43"/>
    </location>
</feature>
<feature type="modified residue" description="4-hydroxyproline" evidence="3">
    <location>
        <position position="46"/>
    </location>
</feature>
<feature type="modified residue" description="3-hydroxyproline" evidence="3">
    <location>
        <position position="279"/>
    </location>
</feature>
<feature type="modified residue" description="4-hydroxyproline" evidence="3">
    <location>
        <position position="280"/>
    </location>
</feature>
<feature type="modified residue" description="4-hydroxyproline" evidence="3">
    <location>
        <position position="286"/>
    </location>
</feature>
<feature type="modified residue" description="4-hydroxyproline" evidence="3">
    <location>
        <position position="292"/>
    </location>
</feature>
<feature type="modified residue" description="3-hydroxyproline" evidence="3">
    <location>
        <position position="516"/>
    </location>
</feature>
<feature type="modified residue" description="4-hydroxyproline" evidence="3">
    <location>
        <position position="553"/>
    </location>
</feature>
<feature type="modified residue" description="3-hydroxyproline" evidence="3">
    <location>
        <position position="558"/>
    </location>
</feature>
<feature type="modified residue" description="4-hydroxyproline" evidence="3">
    <location>
        <position position="559"/>
    </location>
</feature>
<feature type="modified residue" description="3-hydroxyproline" evidence="3">
    <location>
        <position position="573"/>
    </location>
</feature>
<feature type="modified residue" description="4-hydroxyproline" evidence="3">
    <location>
        <position position="574"/>
    </location>
</feature>
<feature type="modified residue" description="4-hydroxyproline" evidence="3">
    <location>
        <position position="577"/>
    </location>
</feature>
<feature type="modified residue" description="3-hydroxyproline" evidence="3">
    <location>
        <position position="579"/>
    </location>
</feature>
<feature type="modified residue" description="4-hydroxyproline" evidence="3">
    <location>
        <position position="580"/>
    </location>
</feature>
<feature type="modified residue" description="4-hydroxyproline" evidence="3">
    <location>
        <position position="583"/>
    </location>
</feature>
<feature type="modified residue" description="3-hydroxyproline" evidence="3">
    <location>
        <position position="585"/>
    </location>
</feature>
<feature type="modified residue" description="4-hydroxyproline" evidence="3">
    <location>
        <position position="586"/>
    </location>
</feature>
<feature type="glycosylation site" description="N-linked (GlcNAc...) asparagine" evidence="2">
    <location>
        <position position="760"/>
    </location>
</feature>
<feature type="disulfide bond" evidence="4">
    <location>
        <begin position="655"/>
        <end position="687"/>
    </location>
</feature>
<feature type="disulfide bond" description="Interchain" evidence="4">
    <location>
        <position position="655"/>
    </location>
</feature>
<feature type="disulfide bond" description="Interchain (with C-678)" evidence="4">
    <location>
        <position position="661"/>
    </location>
</feature>
<feature type="disulfide bond" description="Interchain (with C-661)" evidence="4">
    <location>
        <position position="678"/>
    </location>
</feature>
<feature type="disulfide bond" description="Interchain" evidence="4">
    <location>
        <position position="687"/>
    </location>
</feature>
<feature type="disulfide bond" evidence="4">
    <location>
        <begin position="695"/>
        <end position="857"/>
    </location>
</feature>
<feature type="disulfide bond" evidence="4">
    <location>
        <begin position="765"/>
        <end position="810"/>
    </location>
</feature>
<feature type="splice variant" id="VSP_058908" description="In isoform 2." evidence="6">
    <location>
        <begin position="731"/>
        <end position="811"/>
    </location>
</feature>
<feature type="non-terminal residue">
    <location>
        <position position="1"/>
    </location>
</feature>